<sequence length="262" mass="29831">MQYKTKAKKSLGQNFLQDENIIRKIVQLANIKKHDIVVEIGPGLGALTRYLLSSSNNVSVVEFDASVIDTLIANCQKYGTPHIYNQDFLKFDISSLENSSNQKIKLIGNLPYNISSPILFKVIKDSDKIVDAHFMLQKEVVERIVSLPNSKSYGRLSVILQYHFDCSMILKIPPEVFYPQPKVDSAILRLKPKNSKELLKNYNFFEEIVKQSFAQRRKTLHNNLKSILKERKIDPSTLPVDTNLRAENLSVGDFVSLANFLS</sequence>
<keyword id="KW-0963">Cytoplasm</keyword>
<keyword id="KW-0489">Methyltransferase</keyword>
<keyword id="KW-0694">RNA-binding</keyword>
<keyword id="KW-0698">rRNA processing</keyword>
<keyword id="KW-0949">S-adenosyl-L-methionine</keyword>
<keyword id="KW-0808">Transferase</keyword>
<proteinExistence type="inferred from homology"/>
<evidence type="ECO:0000255" key="1">
    <source>
        <dbReference type="HAMAP-Rule" id="MF_00607"/>
    </source>
</evidence>
<comment type="function">
    <text evidence="1">Specifically dimethylates two adjacent adenosines (A1518 and A1519) in the loop of a conserved hairpin near the 3'-end of 16S rRNA in the 30S particle. May play a critical role in biogenesis of 30S subunits.</text>
</comment>
<comment type="catalytic activity">
    <reaction evidence="1">
        <text>adenosine(1518)/adenosine(1519) in 16S rRNA + 4 S-adenosyl-L-methionine = N(6)-dimethyladenosine(1518)/N(6)-dimethyladenosine(1519) in 16S rRNA + 4 S-adenosyl-L-homocysteine + 4 H(+)</text>
        <dbReference type="Rhea" id="RHEA:19609"/>
        <dbReference type="Rhea" id="RHEA-COMP:10232"/>
        <dbReference type="Rhea" id="RHEA-COMP:10233"/>
        <dbReference type="ChEBI" id="CHEBI:15378"/>
        <dbReference type="ChEBI" id="CHEBI:57856"/>
        <dbReference type="ChEBI" id="CHEBI:59789"/>
        <dbReference type="ChEBI" id="CHEBI:74411"/>
        <dbReference type="ChEBI" id="CHEBI:74493"/>
        <dbReference type="EC" id="2.1.1.182"/>
    </reaction>
</comment>
<comment type="subcellular location">
    <subcellularLocation>
        <location evidence="1">Cytoplasm</location>
    </subcellularLocation>
</comment>
<comment type="similarity">
    <text evidence="1">Belongs to the class I-like SAM-binding methyltransferase superfamily. rRNA adenine N(6)-methyltransferase family. RsmA subfamily.</text>
</comment>
<accession>A7NDV3</accession>
<gene>
    <name evidence="1" type="primary">rsmA</name>
    <name evidence="1" type="synonym">ksgA</name>
    <name type="ordered locus">FTA_1681</name>
</gene>
<dbReference type="EC" id="2.1.1.182" evidence="1"/>
<dbReference type="EMBL" id="CP000803">
    <property type="protein sequence ID" value="ABU62156.1"/>
    <property type="molecule type" value="Genomic_DNA"/>
</dbReference>
<dbReference type="RefSeq" id="WP_003016977.1">
    <property type="nucleotide sequence ID" value="NC_009749.1"/>
</dbReference>
<dbReference type="SMR" id="A7NDV3"/>
<dbReference type="KEGG" id="fta:FTA_1681"/>
<dbReference type="HOGENOM" id="CLU_041220_0_1_6"/>
<dbReference type="GO" id="GO:0005829">
    <property type="term" value="C:cytosol"/>
    <property type="evidence" value="ECO:0007669"/>
    <property type="project" value="TreeGrafter"/>
</dbReference>
<dbReference type="GO" id="GO:0052908">
    <property type="term" value="F:16S rRNA (adenine(1518)-N(6)/adenine(1519)-N(6))-dimethyltransferase activity"/>
    <property type="evidence" value="ECO:0007669"/>
    <property type="project" value="UniProtKB-EC"/>
</dbReference>
<dbReference type="GO" id="GO:0003723">
    <property type="term" value="F:RNA binding"/>
    <property type="evidence" value="ECO:0007669"/>
    <property type="project" value="UniProtKB-KW"/>
</dbReference>
<dbReference type="FunFam" id="1.10.8.100:FF:000001">
    <property type="entry name" value="Ribosomal RNA small subunit methyltransferase A"/>
    <property type="match status" value="1"/>
</dbReference>
<dbReference type="FunFam" id="3.40.50.150:FF:000023">
    <property type="entry name" value="Ribosomal RNA small subunit methyltransferase A"/>
    <property type="match status" value="1"/>
</dbReference>
<dbReference type="Gene3D" id="1.10.8.100">
    <property type="entry name" value="Ribosomal RNA adenine dimethylase-like, domain 2"/>
    <property type="match status" value="1"/>
</dbReference>
<dbReference type="Gene3D" id="3.40.50.150">
    <property type="entry name" value="Vaccinia Virus protein VP39"/>
    <property type="match status" value="1"/>
</dbReference>
<dbReference type="HAMAP" id="MF_00607">
    <property type="entry name" value="16SrRNA_methyltr_A"/>
    <property type="match status" value="1"/>
</dbReference>
<dbReference type="InterPro" id="IPR001737">
    <property type="entry name" value="KsgA/Erm"/>
</dbReference>
<dbReference type="InterPro" id="IPR023165">
    <property type="entry name" value="rRNA_Ade_diMease-like_C"/>
</dbReference>
<dbReference type="InterPro" id="IPR020596">
    <property type="entry name" value="rRNA_Ade_Mease_Trfase_CS"/>
</dbReference>
<dbReference type="InterPro" id="IPR020598">
    <property type="entry name" value="rRNA_Ade_methylase_Trfase_N"/>
</dbReference>
<dbReference type="InterPro" id="IPR011530">
    <property type="entry name" value="rRNA_adenine_dimethylase"/>
</dbReference>
<dbReference type="InterPro" id="IPR029063">
    <property type="entry name" value="SAM-dependent_MTases_sf"/>
</dbReference>
<dbReference type="NCBIfam" id="TIGR00755">
    <property type="entry name" value="ksgA"/>
    <property type="match status" value="1"/>
</dbReference>
<dbReference type="PANTHER" id="PTHR11727">
    <property type="entry name" value="DIMETHYLADENOSINE TRANSFERASE"/>
    <property type="match status" value="1"/>
</dbReference>
<dbReference type="PANTHER" id="PTHR11727:SF7">
    <property type="entry name" value="DIMETHYLADENOSINE TRANSFERASE-RELATED"/>
    <property type="match status" value="1"/>
</dbReference>
<dbReference type="Pfam" id="PF00398">
    <property type="entry name" value="RrnaAD"/>
    <property type="match status" value="1"/>
</dbReference>
<dbReference type="SMART" id="SM00650">
    <property type="entry name" value="rADc"/>
    <property type="match status" value="1"/>
</dbReference>
<dbReference type="SUPFAM" id="SSF53335">
    <property type="entry name" value="S-adenosyl-L-methionine-dependent methyltransferases"/>
    <property type="match status" value="1"/>
</dbReference>
<dbReference type="PROSITE" id="PS01131">
    <property type="entry name" value="RRNA_A_DIMETH"/>
    <property type="match status" value="1"/>
</dbReference>
<dbReference type="PROSITE" id="PS51689">
    <property type="entry name" value="SAM_RNA_A_N6_MT"/>
    <property type="match status" value="1"/>
</dbReference>
<organism>
    <name type="scientific">Francisella tularensis subsp. holarctica (strain FTNF002-00 / FTA)</name>
    <dbReference type="NCBI Taxonomy" id="458234"/>
    <lineage>
        <taxon>Bacteria</taxon>
        <taxon>Pseudomonadati</taxon>
        <taxon>Pseudomonadota</taxon>
        <taxon>Gammaproteobacteria</taxon>
        <taxon>Thiotrichales</taxon>
        <taxon>Francisellaceae</taxon>
        <taxon>Francisella</taxon>
    </lineage>
</organism>
<name>RSMA_FRATF</name>
<reference key="1">
    <citation type="journal article" date="2009" name="PLoS ONE">
        <title>Complete genome sequence of Francisella tularensis subspecies holarctica FTNF002-00.</title>
        <authorList>
            <person name="Barabote R.D."/>
            <person name="Xie G."/>
            <person name="Brettin T.S."/>
            <person name="Hinrichs S.H."/>
            <person name="Fey P.D."/>
            <person name="Jay J.J."/>
            <person name="Engle J.L."/>
            <person name="Godbole S.D."/>
            <person name="Noronha J.M."/>
            <person name="Scheuermann R.H."/>
            <person name="Zhou L.W."/>
            <person name="Lion C."/>
            <person name="Dempsey M.P."/>
        </authorList>
    </citation>
    <scope>NUCLEOTIDE SEQUENCE [LARGE SCALE GENOMIC DNA]</scope>
    <source>
        <strain>FTNF002-00 / FTA</strain>
    </source>
</reference>
<feature type="chain" id="PRO_1000056618" description="Ribosomal RNA small subunit methyltransferase A">
    <location>
        <begin position="1"/>
        <end position="262"/>
    </location>
</feature>
<feature type="binding site" evidence="1">
    <location>
        <position position="14"/>
    </location>
    <ligand>
        <name>S-adenosyl-L-methionine</name>
        <dbReference type="ChEBI" id="CHEBI:59789"/>
    </ligand>
</feature>
<feature type="binding site" evidence="1">
    <location>
        <position position="16"/>
    </location>
    <ligand>
        <name>S-adenosyl-L-methionine</name>
        <dbReference type="ChEBI" id="CHEBI:59789"/>
    </ligand>
</feature>
<feature type="binding site" evidence="1">
    <location>
        <position position="41"/>
    </location>
    <ligand>
        <name>S-adenosyl-L-methionine</name>
        <dbReference type="ChEBI" id="CHEBI:59789"/>
    </ligand>
</feature>
<feature type="binding site" evidence="1">
    <location>
        <position position="62"/>
    </location>
    <ligand>
        <name>S-adenosyl-L-methionine</name>
        <dbReference type="ChEBI" id="CHEBI:59789"/>
    </ligand>
</feature>
<feature type="binding site" evidence="1">
    <location>
        <position position="87"/>
    </location>
    <ligand>
        <name>S-adenosyl-L-methionine</name>
        <dbReference type="ChEBI" id="CHEBI:59789"/>
    </ligand>
</feature>
<feature type="binding site" evidence="1">
    <location>
        <position position="109"/>
    </location>
    <ligand>
        <name>S-adenosyl-L-methionine</name>
        <dbReference type="ChEBI" id="CHEBI:59789"/>
    </ligand>
</feature>
<protein>
    <recommendedName>
        <fullName evidence="1">Ribosomal RNA small subunit methyltransferase A</fullName>
        <ecNumber evidence="1">2.1.1.182</ecNumber>
    </recommendedName>
    <alternativeName>
        <fullName evidence="1">16S rRNA (adenine(1518)-N(6)/adenine(1519)-N(6))-dimethyltransferase</fullName>
    </alternativeName>
    <alternativeName>
        <fullName evidence="1">16S rRNA dimethyladenosine transferase</fullName>
    </alternativeName>
    <alternativeName>
        <fullName evidence="1">16S rRNA dimethylase</fullName>
    </alternativeName>
    <alternativeName>
        <fullName evidence="1">S-adenosylmethionine-6-N', N'-adenosyl(rRNA) dimethyltransferase</fullName>
    </alternativeName>
</protein>